<dbReference type="EC" id="1.-.-.-" evidence="7"/>
<dbReference type="EMBL" id="CAGA01000032">
    <property type="protein sequence ID" value="CCE31564.1"/>
    <property type="molecule type" value="Genomic_DNA"/>
</dbReference>
<dbReference type="SMR" id="M1WG89"/>
<dbReference type="STRING" id="1111077.M1WG89"/>
<dbReference type="VEuPathDB" id="FungiDB:CPUR_05417"/>
<dbReference type="eggNOG" id="ENOG502SPRW">
    <property type="taxonomic scope" value="Eukaryota"/>
</dbReference>
<dbReference type="HOGENOM" id="CLU_108113_0_0_1"/>
<dbReference type="OrthoDB" id="3758478at2759"/>
<dbReference type="PhylomeDB" id="M1WG89"/>
<dbReference type="Proteomes" id="UP000016801">
    <property type="component" value="Unassembled WGS sequence"/>
</dbReference>
<dbReference type="GO" id="GO:0004497">
    <property type="term" value="F:monooxygenase activity"/>
    <property type="evidence" value="ECO:0007669"/>
    <property type="project" value="UniProtKB-KW"/>
</dbReference>
<dbReference type="Gene3D" id="3.10.450.50">
    <property type="match status" value="1"/>
</dbReference>
<dbReference type="InterPro" id="IPR050977">
    <property type="entry name" value="Fungal_Meroterpenoid_Isomerase"/>
</dbReference>
<dbReference type="InterPro" id="IPR032710">
    <property type="entry name" value="NTF2-like_dom_sf"/>
</dbReference>
<dbReference type="PANTHER" id="PTHR39598:SF1">
    <property type="entry name" value="AUSTINOID BIOSYNTHESIS CLUSTERS PROTEIN F-RELATED"/>
    <property type="match status" value="1"/>
</dbReference>
<dbReference type="PANTHER" id="PTHR39598">
    <property type="entry name" value="AUSTINOL SYNTHESIS PROTEIN F-RELATED"/>
    <property type="match status" value="1"/>
</dbReference>
<dbReference type="SUPFAM" id="SSF54427">
    <property type="entry name" value="NTF2-like"/>
    <property type="match status" value="1"/>
</dbReference>
<evidence type="ECO:0000250" key="1">
    <source>
        <dbReference type="UniProtKB" id="Q4W944"/>
    </source>
</evidence>
<evidence type="ECO:0000250" key="2">
    <source>
        <dbReference type="UniProtKB" id="Q5BH30"/>
    </source>
</evidence>
<evidence type="ECO:0000269" key="3">
    <source>
    </source>
</evidence>
<evidence type="ECO:0000269" key="4">
    <source>
    </source>
</evidence>
<evidence type="ECO:0000303" key="5">
    <source>
    </source>
</evidence>
<evidence type="ECO:0000305" key="6"/>
<evidence type="ECO:0000305" key="7">
    <source>
    </source>
</evidence>
<keyword id="KW-0503">Monooxygenase</keyword>
<keyword id="KW-0560">Oxidoreductase</keyword>
<keyword id="KW-1185">Reference proteome</keyword>
<reference key="1">
    <citation type="journal article" date="2013" name="PLoS Genet.">
        <title>Plant-symbiotic fungi as chemical engineers: Multi-genome analysis of the Clavicipitaceae reveals dynamics of alkaloid loci.</title>
        <authorList>
            <person name="Schardl C.L."/>
            <person name="Young C.A."/>
            <person name="Hesse U."/>
            <person name="Amyotte S.G."/>
            <person name="Andreeva K."/>
            <person name="Calie P.J."/>
            <person name="Fleetwood D.J."/>
            <person name="Haws D.C."/>
            <person name="Moore N."/>
            <person name="Oeser B."/>
            <person name="Panaccione D.G."/>
            <person name="Schweri K.K."/>
            <person name="Voisey C.R."/>
            <person name="Farman M.L."/>
            <person name="Jaromczyk J.W."/>
            <person name="Roe B.A."/>
            <person name="O'Sullivan D.M."/>
            <person name="Scott B."/>
            <person name="Tudzynski P."/>
            <person name="An Z."/>
            <person name="Arnaoudova E.G."/>
            <person name="Bullock C.T."/>
            <person name="Charlton N.D."/>
            <person name="Chen L."/>
            <person name="Cox M."/>
            <person name="Dinkins R.D."/>
            <person name="Florea S."/>
            <person name="Glenn A.E."/>
            <person name="Gordon A."/>
            <person name="Gueldener U."/>
            <person name="Harris D.R."/>
            <person name="Hollin W."/>
            <person name="Jaromczyk J."/>
            <person name="Johnson R.D."/>
            <person name="Khan A.K."/>
            <person name="Leistner E."/>
            <person name="Leuchtmann A."/>
            <person name="Li C."/>
            <person name="Liu J."/>
            <person name="Liu J."/>
            <person name="Liu M."/>
            <person name="Mace W."/>
            <person name="Machado C."/>
            <person name="Nagabhyru P."/>
            <person name="Pan J."/>
            <person name="Schmid J."/>
            <person name="Sugawara K."/>
            <person name="Steiner U."/>
            <person name="Takach J.E."/>
            <person name="Tanaka E."/>
            <person name="Webb J.S."/>
            <person name="Wilson E.V."/>
            <person name="Wiseman J.L."/>
            <person name="Yoshida R."/>
            <person name="Zeng Z."/>
        </authorList>
    </citation>
    <scope>NUCLEOTIDE SEQUENCE [LARGE SCALE GENOMIC DNA]</scope>
    <source>
        <strain>20.1</strain>
    </source>
</reference>
<reference key="2">
    <citation type="journal article" date="2016" name="Fungal Biol. Biotechnol.">
        <title>Identification and characterization of the ergochrome gene cluster in the plant pathogenic fungus Claviceps purpurea.</title>
        <authorList>
            <person name="Neubauer L."/>
            <person name="Dopstadt J."/>
            <person name="Humpf H.U."/>
            <person name="Tudzynski P."/>
        </authorList>
    </citation>
    <scope>FUNCTION</scope>
</reference>
<reference key="3">
    <citation type="journal article" date="2019" name="Chem. Sci.">
        <title>Structure revision of cryptosporioptides and determination of the genetic basis for dimeric xanthone biosynthesis in fungi.</title>
        <authorList>
            <person name="Greco C."/>
            <person name="de Mattos-Shipley K."/>
            <person name="Bailey A.M."/>
            <person name="Mulholland N.P."/>
            <person name="Vincent J.L."/>
            <person name="Willis C.L."/>
            <person name="Cox R.J."/>
            <person name="Simpson T.J."/>
        </authorList>
    </citation>
    <scope>IDENTIFICATION</scope>
    <scope>FUNCTION</scope>
</reference>
<reference key="4">
    <citation type="journal article" date="2020" name="Org. Lett.">
        <title>Unraveling the fungal strategy for tetrahydroxanthone biosynthesis and diversification.</title>
        <authorList>
            <person name="Wei X."/>
            <person name="Matsuda Y."/>
        </authorList>
    </citation>
    <scope>FUNCTION</scope>
</reference>
<protein>
    <recommendedName>
        <fullName evidence="5">Monooxygenase CPUR_05417</fullName>
        <ecNumber evidence="7">1.-.-.-</ecNumber>
    </recommendedName>
    <alternativeName>
        <fullName evidence="5">Ergochrome biosynthesis cluster protein CPUR_05417</fullName>
    </alternativeName>
</protein>
<organism>
    <name type="scientific">Claviceps purpurea (strain 20.1)</name>
    <name type="common">Ergot fungus</name>
    <name type="synonym">Sphacelia segetum</name>
    <dbReference type="NCBI Taxonomy" id="1111077"/>
    <lineage>
        <taxon>Eukaryota</taxon>
        <taxon>Fungi</taxon>
        <taxon>Dikarya</taxon>
        <taxon>Ascomycota</taxon>
        <taxon>Pezizomycotina</taxon>
        <taxon>Sordariomycetes</taxon>
        <taxon>Hypocreomycetidae</taxon>
        <taxon>Hypocreales</taxon>
        <taxon>Clavicipitaceae</taxon>
        <taxon>Claviceps</taxon>
    </lineage>
</organism>
<proteinExistence type="inferred from homology"/>
<comment type="function">
    <text evidence="1 2 3 4 7">Monooxygenase; part of the ergochrome gene cluster responsible for the typical purple-black color of the ergot sclerotia (Probable). The ergochrome gene cluster produces several ergot pigments including the yellow ergochrome secalonic acid and its derivatives, as well as the red anthraquinones endocrocin and clavorubin (PubMed:28955461). The pathway begins with the synthesis of atrochrysone thioester by the polyketide synthase (PKS) CPUR_05437 (By similarity). The atrochrysone carboxyl ACP thioesterase CPUR_05436 then breaks the thioester bond and releases the atrochrysone carboxylic acid from CPUR_05437 (By similarity). The atrochrysone carboxylic acid is then converted to atrochrysone which is further transformed into emodin anthrone (By similarity). The next step is performed by the anthrone oxygenase CPUR_05434 that catalyzes the oxidation of emodinanthrone to emodin (By similarity). Emodin is further modified to yield monodictyphenone via several steps involving CPUR_05427, CPUR_05428, CPUR_05429 and CPUR_05430 (By similarity). The short chain dehydrogenase/reductase CPUR_05418 then catalyzes the C-5 ketoreduction to give the xanthone skeleton of the monomeric units (PubMed:32105084). Ergochromes formation requires further dimerization steps of different xanthone units, probably catalyzed by the cytochrome P450 monooxygenase CPUR_05419 (PubMed:28955461). CPUR_05425, CPUR_05426 and CPUR_05431 are unique to Claviceps, thus it is likely that they are involved in further modification of xanthone units or in their dimerization (PubMed:28955461). The yellow ergochromes and the red anthraquinone pigments endocrocin and clavorubin are products from the same PKS derived precursors and the latter are likely shunt products in the pathway of xanthone biosynthesis (PubMed:28955461). It is proposed that atrochrysone carboxylic acid released from the PKS CPUR_05437 can also be converted to endocrocin anthrone which is further oxidized into endocrocin by CPUR_05435 (By similarity). Endocrocin could be then modified to clavorubin, possibly by CPUR_05423 and CPUR_05431 (PubMed:28955461). Clavorubin is the principal anthraquinone metabolite produced by the cluster with a much higher yield compared to endocrocin (PubMed:28955461).</text>
</comment>
<comment type="pathway">
    <text evidence="7">Secondary metabolite biosynthesis.</text>
</comment>
<comment type="similarity">
    <text evidence="6">Belongs to the avfA family.</text>
</comment>
<feature type="chain" id="PRO_0000453494" description="Monooxygenase CPUR_05417">
    <location>
        <begin position="1"/>
        <end position="157"/>
    </location>
</feature>
<accession>M1WG89</accession>
<gene>
    <name type="ORF">CPUR_05417</name>
</gene>
<name>PIG16_CLAP2</name>
<sequence length="157" mass="17447">MSPPAEIQADTLKRFIAGWGGWTMESFFATLSDDFTQKPLPLSCGEPARGREQLYPLLSSLMTMMTNFKLTIHNTIHDPSNKAAVVYAVADGDTPFGPYHNEQAVFIWFNSKGDKVDRIEELFDTAFMAEFKPKFKKWALENPGAAAGRPPPANTST</sequence>